<organism>
    <name type="scientific">Burkholderia mallei (strain SAVP1)</name>
    <dbReference type="NCBI Taxonomy" id="320388"/>
    <lineage>
        <taxon>Bacteria</taxon>
        <taxon>Pseudomonadati</taxon>
        <taxon>Pseudomonadota</taxon>
        <taxon>Betaproteobacteria</taxon>
        <taxon>Burkholderiales</taxon>
        <taxon>Burkholderiaceae</taxon>
        <taxon>Burkholderia</taxon>
        <taxon>pseudomallei group</taxon>
    </lineage>
</organism>
<comment type="function">
    <text evidence="1">Catalyzes the attachment of proline to tRNA(Pro) in a two-step reaction: proline is first activated by ATP to form Pro-AMP and then transferred to the acceptor end of tRNA(Pro). As ProRS can inadvertently accommodate and process non-cognate amino acids such as alanine and cysteine, to avoid such errors it has two additional distinct editing activities against alanine. One activity is designated as 'pretransfer' editing and involves the tRNA(Pro)-independent hydrolysis of activated Ala-AMP. The other activity is designated 'posttransfer' editing and involves deacylation of mischarged Ala-tRNA(Pro). The misacylated Cys-tRNA(Pro) is not edited by ProRS.</text>
</comment>
<comment type="catalytic activity">
    <reaction evidence="1">
        <text>tRNA(Pro) + L-proline + ATP = L-prolyl-tRNA(Pro) + AMP + diphosphate</text>
        <dbReference type="Rhea" id="RHEA:14305"/>
        <dbReference type="Rhea" id="RHEA-COMP:9700"/>
        <dbReference type="Rhea" id="RHEA-COMP:9702"/>
        <dbReference type="ChEBI" id="CHEBI:30616"/>
        <dbReference type="ChEBI" id="CHEBI:33019"/>
        <dbReference type="ChEBI" id="CHEBI:60039"/>
        <dbReference type="ChEBI" id="CHEBI:78442"/>
        <dbReference type="ChEBI" id="CHEBI:78532"/>
        <dbReference type="ChEBI" id="CHEBI:456215"/>
        <dbReference type="EC" id="6.1.1.15"/>
    </reaction>
</comment>
<comment type="subunit">
    <text evidence="1">Homodimer.</text>
</comment>
<comment type="subcellular location">
    <subcellularLocation>
        <location evidence="1">Cytoplasm</location>
    </subcellularLocation>
</comment>
<comment type="domain">
    <text evidence="1">Consists of three domains: the N-terminal catalytic domain, the editing domain and the C-terminal anticodon-binding domain.</text>
</comment>
<comment type="similarity">
    <text evidence="1">Belongs to the class-II aminoacyl-tRNA synthetase family. ProS type 1 subfamily.</text>
</comment>
<gene>
    <name evidence="1" type="primary">proS</name>
    <name type="ordered locus">BMASAVP1_A0439</name>
</gene>
<reference key="1">
    <citation type="journal article" date="2010" name="Genome Biol. Evol.">
        <title>Continuing evolution of Burkholderia mallei through genome reduction and large-scale rearrangements.</title>
        <authorList>
            <person name="Losada L."/>
            <person name="Ronning C.M."/>
            <person name="DeShazer D."/>
            <person name="Woods D."/>
            <person name="Fedorova N."/>
            <person name="Kim H.S."/>
            <person name="Shabalina S.A."/>
            <person name="Pearson T.R."/>
            <person name="Brinkac L."/>
            <person name="Tan P."/>
            <person name="Nandi T."/>
            <person name="Crabtree J."/>
            <person name="Badger J."/>
            <person name="Beckstrom-Sternberg S."/>
            <person name="Saqib M."/>
            <person name="Schutzer S.E."/>
            <person name="Keim P."/>
            <person name="Nierman W.C."/>
        </authorList>
    </citation>
    <scope>NUCLEOTIDE SEQUENCE [LARGE SCALE GENOMIC DNA]</scope>
    <source>
        <strain>SAVP1</strain>
    </source>
</reference>
<dbReference type="EC" id="6.1.1.15" evidence="1"/>
<dbReference type="EMBL" id="CP000526">
    <property type="protein sequence ID" value="ABM50820.1"/>
    <property type="molecule type" value="Genomic_DNA"/>
</dbReference>
<dbReference type="RefSeq" id="WP_004194217.1">
    <property type="nucleotide sequence ID" value="NC_008785.1"/>
</dbReference>
<dbReference type="SMR" id="A1V0N6"/>
<dbReference type="KEGG" id="bmv:BMASAVP1_A0439"/>
<dbReference type="HOGENOM" id="CLU_016739_0_0_4"/>
<dbReference type="GO" id="GO:0005829">
    <property type="term" value="C:cytosol"/>
    <property type="evidence" value="ECO:0007669"/>
    <property type="project" value="TreeGrafter"/>
</dbReference>
<dbReference type="GO" id="GO:0002161">
    <property type="term" value="F:aminoacyl-tRNA deacylase activity"/>
    <property type="evidence" value="ECO:0007669"/>
    <property type="project" value="InterPro"/>
</dbReference>
<dbReference type="GO" id="GO:0005524">
    <property type="term" value="F:ATP binding"/>
    <property type="evidence" value="ECO:0007669"/>
    <property type="project" value="UniProtKB-UniRule"/>
</dbReference>
<dbReference type="GO" id="GO:0004827">
    <property type="term" value="F:proline-tRNA ligase activity"/>
    <property type="evidence" value="ECO:0007669"/>
    <property type="project" value="UniProtKB-UniRule"/>
</dbReference>
<dbReference type="GO" id="GO:0006433">
    <property type="term" value="P:prolyl-tRNA aminoacylation"/>
    <property type="evidence" value="ECO:0007669"/>
    <property type="project" value="UniProtKB-UniRule"/>
</dbReference>
<dbReference type="CDD" id="cd04334">
    <property type="entry name" value="ProRS-INS"/>
    <property type="match status" value="1"/>
</dbReference>
<dbReference type="CDD" id="cd00861">
    <property type="entry name" value="ProRS_anticodon_short"/>
    <property type="match status" value="1"/>
</dbReference>
<dbReference type="CDD" id="cd00779">
    <property type="entry name" value="ProRS_core_prok"/>
    <property type="match status" value="1"/>
</dbReference>
<dbReference type="FunFam" id="3.30.930.10:FF:000043">
    <property type="entry name" value="Proline--tRNA ligase"/>
    <property type="match status" value="1"/>
</dbReference>
<dbReference type="FunFam" id="3.30.930.10:FF:000097">
    <property type="entry name" value="Proline--tRNA ligase"/>
    <property type="match status" value="1"/>
</dbReference>
<dbReference type="Gene3D" id="3.40.50.800">
    <property type="entry name" value="Anticodon-binding domain"/>
    <property type="match status" value="1"/>
</dbReference>
<dbReference type="Gene3D" id="3.30.930.10">
    <property type="entry name" value="Bira Bifunctional Protein, Domain 2"/>
    <property type="match status" value="2"/>
</dbReference>
<dbReference type="Gene3D" id="3.90.960.10">
    <property type="entry name" value="YbaK/aminoacyl-tRNA synthetase-associated domain"/>
    <property type="match status" value="1"/>
</dbReference>
<dbReference type="HAMAP" id="MF_01569">
    <property type="entry name" value="Pro_tRNA_synth_type1"/>
    <property type="match status" value="1"/>
</dbReference>
<dbReference type="InterPro" id="IPR002314">
    <property type="entry name" value="aa-tRNA-synt_IIb"/>
</dbReference>
<dbReference type="InterPro" id="IPR006195">
    <property type="entry name" value="aa-tRNA-synth_II"/>
</dbReference>
<dbReference type="InterPro" id="IPR045864">
    <property type="entry name" value="aa-tRNA-synth_II/BPL/LPL"/>
</dbReference>
<dbReference type="InterPro" id="IPR004154">
    <property type="entry name" value="Anticodon-bd"/>
</dbReference>
<dbReference type="InterPro" id="IPR036621">
    <property type="entry name" value="Anticodon-bd_dom_sf"/>
</dbReference>
<dbReference type="InterPro" id="IPR002316">
    <property type="entry name" value="Pro-tRNA-ligase_IIa"/>
</dbReference>
<dbReference type="InterPro" id="IPR004500">
    <property type="entry name" value="Pro-tRNA-synth_IIa_bac-type"/>
</dbReference>
<dbReference type="InterPro" id="IPR023717">
    <property type="entry name" value="Pro-tRNA-Synthase_IIa_type1"/>
</dbReference>
<dbReference type="InterPro" id="IPR050062">
    <property type="entry name" value="Pro-tRNA_synthetase"/>
</dbReference>
<dbReference type="InterPro" id="IPR044140">
    <property type="entry name" value="ProRS_anticodon_short"/>
</dbReference>
<dbReference type="InterPro" id="IPR033730">
    <property type="entry name" value="ProRS_core_prok"/>
</dbReference>
<dbReference type="InterPro" id="IPR036754">
    <property type="entry name" value="YbaK/aa-tRNA-synt-asso_dom_sf"/>
</dbReference>
<dbReference type="InterPro" id="IPR007214">
    <property type="entry name" value="YbaK/aa-tRNA-synth-assoc-dom"/>
</dbReference>
<dbReference type="NCBIfam" id="NF006625">
    <property type="entry name" value="PRK09194.1"/>
    <property type="match status" value="1"/>
</dbReference>
<dbReference type="NCBIfam" id="TIGR00409">
    <property type="entry name" value="proS_fam_II"/>
    <property type="match status" value="1"/>
</dbReference>
<dbReference type="PANTHER" id="PTHR42753">
    <property type="entry name" value="MITOCHONDRIAL RIBOSOME PROTEIN L39/PROLYL-TRNA LIGASE FAMILY MEMBER"/>
    <property type="match status" value="1"/>
</dbReference>
<dbReference type="PANTHER" id="PTHR42753:SF2">
    <property type="entry name" value="PROLINE--TRNA LIGASE"/>
    <property type="match status" value="1"/>
</dbReference>
<dbReference type="Pfam" id="PF03129">
    <property type="entry name" value="HGTP_anticodon"/>
    <property type="match status" value="1"/>
</dbReference>
<dbReference type="Pfam" id="PF00587">
    <property type="entry name" value="tRNA-synt_2b"/>
    <property type="match status" value="1"/>
</dbReference>
<dbReference type="Pfam" id="PF04073">
    <property type="entry name" value="tRNA_edit"/>
    <property type="match status" value="1"/>
</dbReference>
<dbReference type="PIRSF" id="PIRSF001535">
    <property type="entry name" value="ProRS_1"/>
    <property type="match status" value="1"/>
</dbReference>
<dbReference type="PRINTS" id="PR01046">
    <property type="entry name" value="TRNASYNTHPRO"/>
</dbReference>
<dbReference type="SUPFAM" id="SSF52954">
    <property type="entry name" value="Class II aaRS ABD-related"/>
    <property type="match status" value="1"/>
</dbReference>
<dbReference type="SUPFAM" id="SSF55681">
    <property type="entry name" value="Class II aaRS and biotin synthetases"/>
    <property type="match status" value="1"/>
</dbReference>
<dbReference type="SUPFAM" id="SSF55826">
    <property type="entry name" value="YbaK/ProRS associated domain"/>
    <property type="match status" value="1"/>
</dbReference>
<dbReference type="PROSITE" id="PS50862">
    <property type="entry name" value="AA_TRNA_LIGASE_II"/>
    <property type="match status" value="1"/>
</dbReference>
<protein>
    <recommendedName>
        <fullName evidence="1">Proline--tRNA ligase</fullName>
        <ecNumber evidence="1">6.1.1.15</ecNumber>
    </recommendedName>
    <alternativeName>
        <fullName evidence="1">Prolyl-tRNA synthetase</fullName>
        <shortName evidence="1">ProRS</shortName>
    </alternativeName>
</protein>
<accession>A1V0N6</accession>
<proteinExistence type="inferred from homology"/>
<name>SYP_BURMS</name>
<keyword id="KW-0030">Aminoacyl-tRNA synthetase</keyword>
<keyword id="KW-0067">ATP-binding</keyword>
<keyword id="KW-0963">Cytoplasm</keyword>
<keyword id="KW-0436">Ligase</keyword>
<keyword id="KW-0547">Nucleotide-binding</keyword>
<keyword id="KW-0648">Protein biosynthesis</keyword>
<evidence type="ECO:0000255" key="1">
    <source>
        <dbReference type="HAMAP-Rule" id="MF_01569"/>
    </source>
</evidence>
<feature type="chain" id="PRO_1000069124" description="Proline--tRNA ligase">
    <location>
        <begin position="1"/>
        <end position="578"/>
    </location>
</feature>
<sequence length="578" mass="63420">MKASRFFIGTLKEAPADAEIVSHKLMVRAGMIRRVAGGIYNYLPVGLRSIRKVEAIVREEMNRAGAIELLMPAVQPAELWQESGRWEQYGPELLRFKDRKQNEFVIGPTHEEVVTDIARNQIKSYRQMPVNFYQIQTKFRDEIRPRFGVMRGREFIMKDAYSFDKDHESLKESYKKMYDAYVRIFTRIGLEFRPVAADNGSIGGSGSHEFHVIADTGEDAIAYCPTSDFAANVEAAEALPLLASRAAPAEAMQKVATPGKAKCEAVAELMGIPLERTIKSIVLATDNEGAEPTIWLLMLRGDHDLNEIKTAKLPGLAGHRFATEAEIVEWFGTPPGYLGPIGTKKPVRVVADRTVANMSDFVVGANEVDYHIAGVNWGRDLPEPVVADIRNVKAGDPSPDGKGALDICRGIEVGHVFQLGTKYSDAMGATFIDESGKAQPMVMGCYGIGITRILGAAIEQNFDDKGIVWPEAIAPFEVVLCPMGYDRSDAVREAADKLYADLAAAGIDVILDDRGERPGVMFADWELIGVPHRLVIGERGLKDGKIEYQGRRDAEATLLPADSAAAAVAEKVRAALAR</sequence>